<name>ATI2_ARATH</name>
<reference key="1">
    <citation type="journal article" date="1999" name="Nature">
        <title>Sequence and analysis of chromosome 4 of the plant Arabidopsis thaliana.</title>
        <authorList>
            <person name="Mayer K.F.X."/>
            <person name="Schueller C."/>
            <person name="Wambutt R."/>
            <person name="Murphy G."/>
            <person name="Volckaert G."/>
            <person name="Pohl T."/>
            <person name="Duesterhoeft A."/>
            <person name="Stiekema W."/>
            <person name="Entian K.-D."/>
            <person name="Terryn N."/>
            <person name="Harris B."/>
            <person name="Ansorge W."/>
            <person name="Brandt P."/>
            <person name="Grivell L.A."/>
            <person name="Rieger M."/>
            <person name="Weichselgartner M."/>
            <person name="de Simone V."/>
            <person name="Obermaier B."/>
            <person name="Mache R."/>
            <person name="Mueller M."/>
            <person name="Kreis M."/>
            <person name="Delseny M."/>
            <person name="Puigdomenech P."/>
            <person name="Watson M."/>
            <person name="Schmidtheini T."/>
            <person name="Reichert B."/>
            <person name="Portetelle D."/>
            <person name="Perez-Alonso M."/>
            <person name="Boutry M."/>
            <person name="Bancroft I."/>
            <person name="Vos P."/>
            <person name="Hoheisel J."/>
            <person name="Zimmermann W."/>
            <person name="Wedler H."/>
            <person name="Ridley P."/>
            <person name="Langham S.-A."/>
            <person name="McCullagh B."/>
            <person name="Bilham L."/>
            <person name="Robben J."/>
            <person name="van der Schueren J."/>
            <person name="Grymonprez B."/>
            <person name="Chuang Y.-J."/>
            <person name="Vandenbussche F."/>
            <person name="Braeken M."/>
            <person name="Weltjens I."/>
            <person name="Voet M."/>
            <person name="Bastiaens I."/>
            <person name="Aert R."/>
            <person name="Defoor E."/>
            <person name="Weitzenegger T."/>
            <person name="Bothe G."/>
            <person name="Ramsperger U."/>
            <person name="Hilbert H."/>
            <person name="Braun M."/>
            <person name="Holzer E."/>
            <person name="Brandt A."/>
            <person name="Peters S."/>
            <person name="van Staveren M."/>
            <person name="Dirkse W."/>
            <person name="Mooijman P."/>
            <person name="Klein Lankhorst R."/>
            <person name="Rose M."/>
            <person name="Hauf J."/>
            <person name="Koetter P."/>
            <person name="Berneiser S."/>
            <person name="Hempel S."/>
            <person name="Feldpausch M."/>
            <person name="Lamberth S."/>
            <person name="Van den Daele H."/>
            <person name="De Keyser A."/>
            <person name="Buysshaert C."/>
            <person name="Gielen J."/>
            <person name="Villarroel R."/>
            <person name="De Clercq R."/>
            <person name="van Montagu M."/>
            <person name="Rogers J."/>
            <person name="Cronin A."/>
            <person name="Quail M.A."/>
            <person name="Bray-Allen S."/>
            <person name="Clark L."/>
            <person name="Doggett J."/>
            <person name="Hall S."/>
            <person name="Kay M."/>
            <person name="Lennard N."/>
            <person name="McLay K."/>
            <person name="Mayes R."/>
            <person name="Pettett A."/>
            <person name="Rajandream M.A."/>
            <person name="Lyne M."/>
            <person name="Benes V."/>
            <person name="Rechmann S."/>
            <person name="Borkova D."/>
            <person name="Bloecker H."/>
            <person name="Scharfe M."/>
            <person name="Grimm M."/>
            <person name="Loehnert T.-H."/>
            <person name="Dose S."/>
            <person name="de Haan M."/>
            <person name="Maarse A.C."/>
            <person name="Schaefer M."/>
            <person name="Mueller-Auer S."/>
            <person name="Gabel C."/>
            <person name="Fuchs M."/>
            <person name="Fartmann B."/>
            <person name="Granderath K."/>
            <person name="Dauner D."/>
            <person name="Herzl A."/>
            <person name="Neumann S."/>
            <person name="Argiriou A."/>
            <person name="Vitale D."/>
            <person name="Liguori R."/>
            <person name="Piravandi E."/>
            <person name="Massenet O."/>
            <person name="Quigley F."/>
            <person name="Clabauld G."/>
            <person name="Muendlein A."/>
            <person name="Felber R."/>
            <person name="Schnabl S."/>
            <person name="Hiller R."/>
            <person name="Schmidt W."/>
            <person name="Lecharny A."/>
            <person name="Aubourg S."/>
            <person name="Chefdor F."/>
            <person name="Cooke R."/>
            <person name="Berger C."/>
            <person name="Monfort A."/>
            <person name="Casacuberta E."/>
            <person name="Gibbons T."/>
            <person name="Weber N."/>
            <person name="Vandenbol M."/>
            <person name="Bargues M."/>
            <person name="Terol J."/>
            <person name="Torres A."/>
            <person name="Perez-Perez A."/>
            <person name="Purnelle B."/>
            <person name="Bent E."/>
            <person name="Johnson S."/>
            <person name="Tacon D."/>
            <person name="Jesse T."/>
            <person name="Heijnen L."/>
            <person name="Schwarz S."/>
            <person name="Scholler P."/>
            <person name="Heber S."/>
            <person name="Francs P."/>
            <person name="Bielke C."/>
            <person name="Frishman D."/>
            <person name="Haase D."/>
            <person name="Lemcke K."/>
            <person name="Mewes H.-W."/>
            <person name="Stocker S."/>
            <person name="Zaccaria P."/>
            <person name="Bevan M."/>
            <person name="Wilson R.K."/>
            <person name="de la Bastide M."/>
            <person name="Habermann K."/>
            <person name="Parnell L."/>
            <person name="Dedhia N."/>
            <person name="Gnoj L."/>
            <person name="Schutz K."/>
            <person name="Huang E."/>
            <person name="Spiegel L."/>
            <person name="Sekhon M."/>
            <person name="Murray J."/>
            <person name="Sheet P."/>
            <person name="Cordes M."/>
            <person name="Abu-Threideh J."/>
            <person name="Stoneking T."/>
            <person name="Kalicki J."/>
            <person name="Graves T."/>
            <person name="Harmon G."/>
            <person name="Edwards J."/>
            <person name="Latreille P."/>
            <person name="Courtney L."/>
            <person name="Cloud J."/>
            <person name="Abbott A."/>
            <person name="Scott K."/>
            <person name="Johnson D."/>
            <person name="Minx P."/>
            <person name="Bentley D."/>
            <person name="Fulton B."/>
            <person name="Miller N."/>
            <person name="Greco T."/>
            <person name="Kemp K."/>
            <person name="Kramer J."/>
            <person name="Fulton L."/>
            <person name="Mardis E."/>
            <person name="Dante M."/>
            <person name="Pepin K."/>
            <person name="Hillier L.W."/>
            <person name="Nelson J."/>
            <person name="Spieth J."/>
            <person name="Ryan E."/>
            <person name="Andrews S."/>
            <person name="Geisel C."/>
            <person name="Layman D."/>
            <person name="Du H."/>
            <person name="Ali J."/>
            <person name="Berghoff A."/>
            <person name="Jones K."/>
            <person name="Drone K."/>
            <person name="Cotton M."/>
            <person name="Joshu C."/>
            <person name="Antonoiu B."/>
            <person name="Zidanic M."/>
            <person name="Strong C."/>
            <person name="Sun H."/>
            <person name="Lamar B."/>
            <person name="Yordan C."/>
            <person name="Ma P."/>
            <person name="Zhong J."/>
            <person name="Preston R."/>
            <person name="Vil D."/>
            <person name="Shekher M."/>
            <person name="Matero A."/>
            <person name="Shah R."/>
            <person name="Swaby I.K."/>
            <person name="O'Shaughnessy A."/>
            <person name="Rodriguez M."/>
            <person name="Hoffman J."/>
            <person name="Till S."/>
            <person name="Granat S."/>
            <person name="Shohdy N."/>
            <person name="Hasegawa A."/>
            <person name="Hameed A."/>
            <person name="Lodhi M."/>
            <person name="Johnson A."/>
            <person name="Chen E."/>
            <person name="Marra M.A."/>
            <person name="Martienssen R."/>
            <person name="McCombie W.R."/>
        </authorList>
    </citation>
    <scope>NUCLEOTIDE SEQUENCE [LARGE SCALE GENOMIC DNA]</scope>
    <source>
        <strain>cv. Columbia</strain>
    </source>
</reference>
<reference key="2">
    <citation type="journal article" date="2017" name="Plant J.">
        <title>Araport11: a complete reannotation of the Arabidopsis thaliana reference genome.</title>
        <authorList>
            <person name="Cheng C.Y."/>
            <person name="Krishnakumar V."/>
            <person name="Chan A.P."/>
            <person name="Thibaud-Nissen F."/>
            <person name="Schobel S."/>
            <person name="Town C.D."/>
        </authorList>
    </citation>
    <scope>GENOME REANNOTATION</scope>
    <source>
        <strain>cv. Columbia</strain>
    </source>
</reference>
<reference key="3">
    <citation type="journal article" date="2003" name="Science">
        <title>Empirical analysis of transcriptional activity in the Arabidopsis genome.</title>
        <authorList>
            <person name="Yamada K."/>
            <person name="Lim J."/>
            <person name="Dale J.M."/>
            <person name="Chen H."/>
            <person name="Shinn P."/>
            <person name="Palm C.J."/>
            <person name="Southwick A.M."/>
            <person name="Wu H.C."/>
            <person name="Kim C.J."/>
            <person name="Nguyen M."/>
            <person name="Pham P.K."/>
            <person name="Cheuk R.F."/>
            <person name="Karlin-Newmann G."/>
            <person name="Liu S.X."/>
            <person name="Lam B."/>
            <person name="Sakano H."/>
            <person name="Wu T."/>
            <person name="Yu G."/>
            <person name="Miranda M."/>
            <person name="Quach H.L."/>
            <person name="Tripp M."/>
            <person name="Chang C.H."/>
            <person name="Lee J.M."/>
            <person name="Toriumi M.J."/>
            <person name="Chan M.M."/>
            <person name="Tang C.C."/>
            <person name="Onodera C.S."/>
            <person name="Deng J.M."/>
            <person name="Akiyama K."/>
            <person name="Ansari Y."/>
            <person name="Arakawa T."/>
            <person name="Banh J."/>
            <person name="Banno F."/>
            <person name="Bowser L."/>
            <person name="Brooks S.Y."/>
            <person name="Carninci P."/>
            <person name="Chao Q."/>
            <person name="Choy N."/>
            <person name="Enju A."/>
            <person name="Goldsmith A.D."/>
            <person name="Gurjal M."/>
            <person name="Hansen N.F."/>
            <person name="Hayashizaki Y."/>
            <person name="Johnson-Hopson C."/>
            <person name="Hsuan V.W."/>
            <person name="Iida K."/>
            <person name="Karnes M."/>
            <person name="Khan S."/>
            <person name="Koesema E."/>
            <person name="Ishida J."/>
            <person name="Jiang P.X."/>
            <person name="Jones T."/>
            <person name="Kawai J."/>
            <person name="Kamiya A."/>
            <person name="Meyers C."/>
            <person name="Nakajima M."/>
            <person name="Narusaka M."/>
            <person name="Seki M."/>
            <person name="Sakurai T."/>
            <person name="Satou M."/>
            <person name="Tamse R."/>
            <person name="Vaysberg M."/>
            <person name="Wallender E.K."/>
            <person name="Wong C."/>
            <person name="Yamamura Y."/>
            <person name="Yuan S."/>
            <person name="Shinozaki K."/>
            <person name="Davis R.W."/>
            <person name="Theologis A."/>
            <person name="Ecker J.R."/>
        </authorList>
    </citation>
    <scope>NUCLEOTIDE SEQUENCE [LARGE SCALE MRNA] (ISOFORM 1)</scope>
    <source>
        <strain>cv. Columbia</strain>
    </source>
</reference>
<reference key="4">
    <citation type="journal article" date="2009" name="DNA Res.">
        <title>Analysis of multiple occurrences of alternative splicing events in Arabidopsis thaliana using novel sequenced full-length cDNAs.</title>
        <authorList>
            <person name="Iida K."/>
            <person name="Fukami-Kobayashi K."/>
            <person name="Toyoda A."/>
            <person name="Sakaki Y."/>
            <person name="Kobayashi M."/>
            <person name="Seki M."/>
            <person name="Shinozaki K."/>
        </authorList>
    </citation>
    <scope>NUCLEOTIDE SEQUENCE [LARGE SCALE MRNA] (ISOFORMS 1 AND 2)</scope>
    <source>
        <strain>cv. Columbia</strain>
    </source>
</reference>
<reference key="5">
    <citation type="journal article" date="2010" name="FEBS Lett.">
        <title>Atg8-family interacting motif crucial for selective autophagy.</title>
        <authorList>
            <person name="Noda N.N."/>
            <person name="Ohsumi Y."/>
            <person name="Inagaki F."/>
        </authorList>
    </citation>
    <scope>AIM MOTIF</scope>
</reference>
<reference key="6">
    <citation type="journal article" date="2012" name="Plant Cell">
        <title>A new type of compartment, defined by plant-specific Atg8-interacting proteins, is induced upon exposure of Arabidopsis plants to carbon starvation.</title>
        <authorList>
            <person name="Honig A."/>
            <person name="Avin-Wittenberg T."/>
            <person name="Ufaz S."/>
            <person name="Galili G."/>
        </authorList>
    </citation>
    <scope>FUNCTION</scope>
    <scope>INTERACTION WITH ATG8F</scope>
    <scope>SUBCELLULAR LOCATION</scope>
</reference>
<reference key="7">
    <citation type="journal article" date="2014" name="Plant Cell">
        <title>Arabidopsis ATG8-INTERACTING PROTEIN1 is involved in autophagy-dependent vesicular trafficking of plastid proteins to the vacuole.</title>
        <authorList>
            <person name="Michaeli S."/>
            <person name="Honig A."/>
            <person name="Levanony H."/>
            <person name="Peled-Zehavi H."/>
            <person name="Galili G."/>
        </authorList>
    </citation>
    <scope>FUNCTION</scope>
</reference>
<protein>
    <recommendedName>
        <fullName evidence="3">ATG8-interacting protein 2</fullName>
    </recommendedName>
</protein>
<dbReference type="EMBL" id="AF013293">
    <property type="protein sequence ID" value="AAB62839.1"/>
    <property type="status" value="ALT_SEQ"/>
    <property type="molecule type" value="Genomic_DNA"/>
</dbReference>
<dbReference type="EMBL" id="AF195115">
    <property type="protein sequence ID" value="AAF02797.1"/>
    <property type="status" value="ALT_SEQ"/>
    <property type="molecule type" value="Genomic_DNA"/>
</dbReference>
<dbReference type="EMBL" id="AL161471">
    <property type="protein sequence ID" value="CAB80793.1"/>
    <property type="status" value="ALT_SEQ"/>
    <property type="molecule type" value="Genomic_DNA"/>
</dbReference>
<dbReference type="EMBL" id="CP002687">
    <property type="protein sequence ID" value="AEE81865.1"/>
    <property type="molecule type" value="Genomic_DNA"/>
</dbReference>
<dbReference type="EMBL" id="CP002687">
    <property type="protein sequence ID" value="AEE81866.1"/>
    <property type="molecule type" value="Genomic_DNA"/>
</dbReference>
<dbReference type="EMBL" id="CP002687">
    <property type="protein sequence ID" value="AEE81867.1"/>
    <property type="molecule type" value="Genomic_DNA"/>
</dbReference>
<dbReference type="EMBL" id="CP002687">
    <property type="protein sequence ID" value="AEE81868.1"/>
    <property type="molecule type" value="Genomic_DNA"/>
</dbReference>
<dbReference type="EMBL" id="AY072334">
    <property type="protein sequence ID" value="AAL61941.1"/>
    <property type="molecule type" value="mRNA"/>
</dbReference>
<dbReference type="EMBL" id="BT001202">
    <property type="protein sequence ID" value="AAN65089.1"/>
    <property type="molecule type" value="mRNA"/>
</dbReference>
<dbReference type="EMBL" id="AK316778">
    <property type="protein sequence ID" value="BAH19497.1"/>
    <property type="molecule type" value="mRNA"/>
</dbReference>
<dbReference type="EMBL" id="AK317403">
    <property type="protein sequence ID" value="BAH20073.1"/>
    <property type="molecule type" value="mRNA"/>
</dbReference>
<dbReference type="EMBL" id="AK317431">
    <property type="protein sequence ID" value="BAH20099.1"/>
    <property type="molecule type" value="mRNA"/>
</dbReference>
<dbReference type="RefSeq" id="NP_001031565.1">
    <molecule id="Q8VY98-2"/>
    <property type="nucleotide sequence ID" value="NM_001036488.1"/>
</dbReference>
<dbReference type="RefSeq" id="NP_567174.1">
    <molecule id="Q8VY98-1"/>
    <property type="nucleotide sequence ID" value="NM_116259.3"/>
</dbReference>
<dbReference type="RefSeq" id="NP_849272.1">
    <molecule id="Q8VY98-1"/>
    <property type="nucleotide sequence ID" value="NM_178941.4"/>
</dbReference>
<dbReference type="RefSeq" id="NP_849274.2">
    <molecule id="Q8VY98-1"/>
    <property type="nucleotide sequence ID" value="NM_178943.3"/>
</dbReference>
<dbReference type="FunCoup" id="Q8VY98">
    <property type="interactions" value="593"/>
</dbReference>
<dbReference type="STRING" id="3702.Q8VY98"/>
<dbReference type="iPTMnet" id="Q8VY98"/>
<dbReference type="PaxDb" id="3702-AT4G00355.3"/>
<dbReference type="ProteomicsDB" id="246629">
    <molecule id="Q8VY98-1"/>
</dbReference>
<dbReference type="EnsemblPlants" id="AT4G00355.1">
    <molecule id="Q8VY98-1"/>
    <property type="protein sequence ID" value="AT4G00355.1"/>
    <property type="gene ID" value="AT4G00355"/>
</dbReference>
<dbReference type="EnsemblPlants" id="AT4G00355.2">
    <molecule id="Q8VY98-1"/>
    <property type="protein sequence ID" value="AT4G00355.2"/>
    <property type="gene ID" value="AT4G00355"/>
</dbReference>
<dbReference type="EnsemblPlants" id="AT4G00355.3">
    <molecule id="Q8VY98-1"/>
    <property type="protein sequence ID" value="AT4G00355.3"/>
    <property type="gene ID" value="AT4G00355"/>
</dbReference>
<dbReference type="EnsemblPlants" id="AT4G00355.4">
    <molecule id="Q8VY98-2"/>
    <property type="protein sequence ID" value="AT4G00355.4"/>
    <property type="gene ID" value="AT4G00355"/>
</dbReference>
<dbReference type="GeneID" id="827659"/>
<dbReference type="Gramene" id="AT4G00355.1">
    <molecule id="Q8VY98-1"/>
    <property type="protein sequence ID" value="AT4G00355.1"/>
    <property type="gene ID" value="AT4G00355"/>
</dbReference>
<dbReference type="Gramene" id="AT4G00355.2">
    <molecule id="Q8VY98-1"/>
    <property type="protein sequence ID" value="AT4G00355.2"/>
    <property type="gene ID" value="AT4G00355"/>
</dbReference>
<dbReference type="Gramene" id="AT4G00355.3">
    <molecule id="Q8VY98-1"/>
    <property type="protein sequence ID" value="AT4G00355.3"/>
    <property type="gene ID" value="AT4G00355"/>
</dbReference>
<dbReference type="Gramene" id="AT4G00355.4">
    <molecule id="Q8VY98-2"/>
    <property type="protein sequence ID" value="AT4G00355.4"/>
    <property type="gene ID" value="AT4G00355"/>
</dbReference>
<dbReference type="KEGG" id="ath:AT4G00355"/>
<dbReference type="Araport" id="AT4G00355"/>
<dbReference type="TAIR" id="AT4G00355">
    <property type="gene designation" value="ATI2"/>
</dbReference>
<dbReference type="eggNOG" id="KOG1347">
    <property type="taxonomic scope" value="Eukaryota"/>
</dbReference>
<dbReference type="HOGENOM" id="CLU_054659_0_0_1"/>
<dbReference type="InParanoid" id="Q8VY98"/>
<dbReference type="OMA" id="QHEDSAF"/>
<dbReference type="PhylomeDB" id="Q8VY98"/>
<dbReference type="PRO" id="PR:Q8VY98"/>
<dbReference type="Proteomes" id="UP000006548">
    <property type="component" value="Chromosome 4"/>
</dbReference>
<dbReference type="ExpressionAtlas" id="Q8VY98">
    <property type="expression patterns" value="baseline and differential"/>
</dbReference>
<dbReference type="GO" id="GO:0005783">
    <property type="term" value="C:endoplasmic reticulum"/>
    <property type="evidence" value="ECO:0000314"/>
    <property type="project" value="TAIR"/>
</dbReference>
<dbReference type="GO" id="GO:0005789">
    <property type="term" value="C:endoplasmic reticulum membrane"/>
    <property type="evidence" value="ECO:0007669"/>
    <property type="project" value="UniProtKB-SubCell"/>
</dbReference>
<dbReference type="GO" id="GO:0043231">
    <property type="term" value="C:intracellular membrane-bounded organelle"/>
    <property type="evidence" value="ECO:0000314"/>
    <property type="project" value="TAIR"/>
</dbReference>
<dbReference type="GO" id="GO:0006914">
    <property type="term" value="P:autophagy"/>
    <property type="evidence" value="ECO:0007669"/>
    <property type="project" value="UniProtKB-KW"/>
</dbReference>
<dbReference type="GO" id="GO:0015031">
    <property type="term" value="P:protein transport"/>
    <property type="evidence" value="ECO:0007669"/>
    <property type="project" value="UniProtKB-KW"/>
</dbReference>
<dbReference type="DisProt" id="DP02550"/>
<dbReference type="InterPro" id="IPR040304">
    <property type="entry name" value="ATG8-IP-1/2"/>
</dbReference>
<dbReference type="PANTHER" id="PTHR34797">
    <property type="entry name" value="ATG8-INTERACTING PROTEIN 2"/>
    <property type="match status" value="1"/>
</dbReference>
<dbReference type="PANTHER" id="PTHR34797:SF1">
    <property type="entry name" value="ATG8-INTERACTING PROTEIN 2"/>
    <property type="match status" value="1"/>
</dbReference>
<gene>
    <name evidence="3" type="primary">ATI2</name>
    <name evidence="7" type="ordered locus">At4g00355</name>
    <name evidence="8" type="ORF">A_IG005I10.20</name>
    <name evidence="9" type="ORF">F5I10.20</name>
</gene>
<accession>Q8VY98</accession>
<accession>B9DH56</accession>
<accession>Q27GJ8</accession>
<accession>Q3EAE4</accession>
<comment type="function">
    <text evidence="2 6">May be involved in salt stress-induced vesicle-to-vacuole trafficking pathway. Through its interaction with ATG8F, may enable delivery of the vesicle bodies to the vacuole by an autophagic pathway (Probable). Plays a role in seed germination in response to exogenous abscisic acid (ABA) treatment (PubMed:22253227).</text>
</comment>
<comment type="subunit">
    <text evidence="2">Interacts with ATG8F.</text>
</comment>
<comment type="subcellular location">
    <subcellularLocation>
        <location evidence="2">Endoplasmic reticulum membrane</location>
        <topology evidence="1">Single-pass membrane protein</topology>
    </subcellularLocation>
    <subcellularLocation>
        <location evidence="1">Membrane</location>
        <topology evidence="1">Single-pass membrane protein</topology>
    </subcellularLocation>
    <text evidence="2">Under favorable growth conditions, partially associated with the endoplasmic reticulum (ER) membrane network. Upon exposure to carbon starvation, mainly associated with newly identified spherical compartments that dynamically move along the ER network and reach the lytic vacuole.</text>
</comment>
<comment type="alternative products">
    <event type="alternative splicing"/>
    <isoform>
        <id>Q8VY98-1</id>
        <name>1</name>
        <sequence type="displayed"/>
    </isoform>
    <isoform>
        <id>Q8VY98-2</id>
        <name>2</name>
        <sequence type="described" ref="VSP_057970"/>
    </isoform>
</comment>
<comment type="miscellaneous">
    <text evidence="2">Plants silencing ATI1 and ATI2 display decreased ability of seed germination in presence of exogenous abscisic acid (ABA).</text>
</comment>
<comment type="sequence caution" evidence="4">
    <conflict type="erroneous gene model prediction">
        <sequence resource="EMBL-CDS" id="AAB62839"/>
    </conflict>
    <text>The predicted gene At4g00350 has been split into 2 genes: At4g00350 and At4g00355.</text>
</comment>
<comment type="sequence caution" evidence="4">
    <conflict type="erroneous gene model prediction">
        <sequence resource="EMBL-CDS" id="AAF02797"/>
    </conflict>
    <text>The predicted gene At4g00350 has been split into 2 genes: At4g00350 and At4g00355.</text>
</comment>
<comment type="sequence caution" evidence="4">
    <conflict type="erroneous gene model prediction">
        <sequence resource="EMBL-CDS" id="CAB80793"/>
    </conflict>
    <text>The predicted gene At4g00350 has been split into 2 genes: At4g00350 and At4g00355.</text>
</comment>
<organism>
    <name type="scientific">Arabidopsis thaliana</name>
    <name type="common">Mouse-ear cress</name>
    <dbReference type="NCBI Taxonomy" id="3702"/>
    <lineage>
        <taxon>Eukaryota</taxon>
        <taxon>Viridiplantae</taxon>
        <taxon>Streptophyta</taxon>
        <taxon>Embryophyta</taxon>
        <taxon>Tracheophyta</taxon>
        <taxon>Spermatophyta</taxon>
        <taxon>Magnoliopsida</taxon>
        <taxon>eudicotyledons</taxon>
        <taxon>Gunneridae</taxon>
        <taxon>Pentapetalae</taxon>
        <taxon>rosids</taxon>
        <taxon>malvids</taxon>
        <taxon>Brassicales</taxon>
        <taxon>Brassicaceae</taxon>
        <taxon>Camelineae</taxon>
        <taxon>Arabidopsis</taxon>
    </lineage>
</organism>
<proteinExistence type="evidence at protein level"/>
<evidence type="ECO:0000255" key="1"/>
<evidence type="ECO:0000269" key="2">
    <source>
    </source>
</evidence>
<evidence type="ECO:0000303" key="3">
    <source>
    </source>
</evidence>
<evidence type="ECO:0000305" key="4"/>
<evidence type="ECO:0000305" key="5">
    <source>
    </source>
</evidence>
<evidence type="ECO:0000305" key="6">
    <source>
    </source>
</evidence>
<evidence type="ECO:0000312" key="7">
    <source>
        <dbReference type="Araport" id="AT4G00355"/>
    </source>
</evidence>
<evidence type="ECO:0000312" key="8">
    <source>
        <dbReference type="EMBL" id="AAB62839.1"/>
    </source>
</evidence>
<evidence type="ECO:0000312" key="9">
    <source>
        <dbReference type="EMBL" id="AAF02797.1"/>
    </source>
</evidence>
<keyword id="KW-0025">Alternative splicing</keyword>
<keyword id="KW-0072">Autophagy</keyword>
<keyword id="KW-0256">Endoplasmic reticulum</keyword>
<keyword id="KW-0472">Membrane</keyword>
<keyword id="KW-0653">Protein transport</keyword>
<keyword id="KW-1185">Reference proteome</keyword>
<keyword id="KW-0346">Stress response</keyword>
<keyword id="KW-0812">Transmembrane</keyword>
<keyword id="KW-1133">Transmembrane helix</keyword>
<keyword id="KW-0813">Transport</keyword>
<sequence>MADKDEAATRGNDWEVVSLTASAYAAAPGPKPVVDSKDDDHKEVTPCYEAETSHPLYMSRHFVFPPTGQLENTSDLTEASLTGSHCKEGSDLSLKGLDLSDDFGGLEFSEDKGKKEENIYTTAMSSLDDERAIGGSHVYEPVEEPTEPVSPSDVTLDLNPIKDDEVANSPPSEEAWWKRSVASLIAQAKETNTVWSICIAAAVMGIVILGQHWQQERWQILQQKWESSIGNEKAGRLMGPISRLKQAFVGGQRRDSFIRASAQNDR</sequence>
<feature type="chain" id="PRO_0000434631" description="ATG8-interacting protein 2">
    <location>
        <begin position="1"/>
        <end position="266"/>
    </location>
</feature>
<feature type="transmembrane region" description="Helical" evidence="1">
    <location>
        <begin position="191"/>
        <end position="210"/>
    </location>
</feature>
<feature type="short sequence motif" description="AIM (Atg8-family-interacting motif)" evidence="5">
    <location>
        <begin position="14"/>
        <end position="17"/>
    </location>
</feature>
<feature type="short sequence motif" description="AIM (Atg8-family-interacting motif)" evidence="5">
    <location>
        <begin position="218"/>
        <end position="221"/>
    </location>
</feature>
<feature type="splice variant" id="VSP_057970" description="In isoform 2.">
    <original>KAGRLMGPISRLKQAFVGGQRRDSFIRASAQNDR</original>
    <variation>VFSLGSLFFEPPWYDVSLNYVTTLFGCRKLED</variation>
    <location>
        <begin position="233"/>
        <end position="266"/>
    </location>
</feature>
<feature type="sequence conflict" description="In Ref. 4; BAH20073." evidence="4" ref="4">
    <original>E</original>
    <variation>G</variation>
    <location>
        <position position="51"/>
    </location>
</feature>